<keyword id="KW-0025">Alternative splicing</keyword>
<keyword id="KW-0067">ATP-binding</keyword>
<keyword id="KW-0963">Cytoplasm</keyword>
<keyword id="KW-0547">Nucleotide-binding</keyword>
<keyword id="KW-1267">Proteomics identification</keyword>
<keyword id="KW-1185">Reference proteome</keyword>
<keyword id="KW-0677">Repeat</keyword>
<keyword id="KW-0853">WD repeat</keyword>
<proteinExistence type="evidence at protein level"/>
<protein>
    <recommendedName>
        <fullName>NACHT domain- and WD repeat-containing protein 1</fullName>
    </recommendedName>
</protein>
<accession>Q149M9</accession>
<accession>C9J021</accession>
<accession>Q68CT3</accession>
<comment type="function">
    <text evidence="3">May play a role in the control of androgen receptor (AR) protein steady-state levels.</text>
</comment>
<comment type="subunit">
    <text evidence="3">May interact with HSP90AA1, HSP90AB1 and BAG2.</text>
</comment>
<comment type="subcellular location">
    <subcellularLocation>
        <location evidence="3">Cytoplasm</location>
        <location evidence="3">Cytosol</location>
    </subcellularLocation>
</comment>
<comment type="alternative products">
    <event type="alternative splicing"/>
    <isoform>
        <id>Q149M9-1</id>
        <name>1</name>
        <sequence type="displayed"/>
    </isoform>
    <isoform>
        <id>Q149M9-2</id>
        <name>2</name>
        <sequence type="described" ref="VSP_040651 VSP_040652"/>
    </isoform>
    <isoform>
        <id>Q149M9-3</id>
        <name>3</name>
        <sequence type="described" ref="VSP_028940 VSP_028941"/>
    </isoform>
</comment>
<comment type="tissue specificity">
    <text evidence="3">Expressed at highest levels in prostate, followed by testis, retina, trachea and optic nerve. Also detected in brain, epididymis, lung, vagina and pituitary. In the prostate, tends to be up-regulated during malignant progression compared to normal epithelium (at protein level).</text>
</comment>
<comment type="induction">
    <text evidence="3">May be up-regulated by SOX9 and SRY.</text>
</comment>
<comment type="miscellaneous">
    <molecule>Isoform 2</molecule>
    <text evidence="6">May be produced at very low levels due to a premature stop codon in the mRNA, leading to nonsense-mediated mRNA decay.</text>
</comment>
<comment type="sequence caution" evidence="6">
    <conflict type="erroneous translation">
        <sequence resource="EMBL-CDS" id="AAI17699"/>
    </conflict>
    <text>Wrong choice of CDS.</text>
</comment>
<dbReference type="EMBL" id="CR749794">
    <property type="protein sequence ID" value="CAH18655.1"/>
    <property type="molecule type" value="mRNA"/>
</dbReference>
<dbReference type="EMBL" id="AC008737">
    <property type="status" value="NOT_ANNOTATED_CDS"/>
    <property type="molecule type" value="Genomic_DNA"/>
</dbReference>
<dbReference type="EMBL" id="BC117698">
    <property type="protein sequence ID" value="AAI17699.1"/>
    <property type="status" value="ALT_SEQ"/>
    <property type="molecule type" value="mRNA"/>
</dbReference>
<dbReference type="CCDS" id="CCDS32945.2">
    <molecule id="Q149M9-3"/>
</dbReference>
<dbReference type="RefSeq" id="NP_001007526.3">
    <molecule id="Q149M9-3"/>
    <property type="nucleotide sequence ID" value="NM_001007525.5"/>
</dbReference>
<dbReference type="RefSeq" id="NP_001277284.1">
    <property type="nucleotide sequence ID" value="NM_001290355.2"/>
</dbReference>
<dbReference type="RefSeq" id="NP_001334923.1">
    <property type="nucleotide sequence ID" value="NM_001347994.1"/>
</dbReference>
<dbReference type="RefSeq" id="XP_011526231.1">
    <molecule id="Q149M9-1"/>
    <property type="nucleotide sequence ID" value="XM_011527929.2"/>
</dbReference>
<dbReference type="RefSeq" id="XP_011526232.1">
    <molecule id="Q149M9-1"/>
    <property type="nucleotide sequence ID" value="XM_011527930.3"/>
</dbReference>
<dbReference type="RefSeq" id="XP_011526233.1">
    <molecule id="Q149M9-1"/>
    <property type="nucleotide sequence ID" value="XM_011527931.3"/>
</dbReference>
<dbReference type="RefSeq" id="XP_024307234.1">
    <molecule id="Q149M9-3"/>
    <property type="nucleotide sequence ID" value="XM_024451466.2"/>
</dbReference>
<dbReference type="SMR" id="Q149M9"/>
<dbReference type="BioGRID" id="129876">
    <property type="interactions" value="4"/>
</dbReference>
<dbReference type="FunCoup" id="Q149M9">
    <property type="interactions" value="587"/>
</dbReference>
<dbReference type="IntAct" id="Q149M9">
    <property type="interactions" value="3"/>
</dbReference>
<dbReference type="STRING" id="9606.ENSP00000501265"/>
<dbReference type="iPTMnet" id="Q149M9"/>
<dbReference type="PhosphoSitePlus" id="Q149M9"/>
<dbReference type="BioMuta" id="NWD1"/>
<dbReference type="DMDM" id="313104204"/>
<dbReference type="MassIVE" id="Q149M9"/>
<dbReference type="PaxDb" id="9606-ENSP00000428579"/>
<dbReference type="PeptideAtlas" id="Q149M9"/>
<dbReference type="ProteomicsDB" id="60291">
    <molecule id="Q149M9-1"/>
</dbReference>
<dbReference type="ProteomicsDB" id="60293">
    <molecule id="Q149M9-3"/>
</dbReference>
<dbReference type="Antibodypedia" id="69163">
    <property type="antibodies" value="9 antibodies from 7 providers"/>
</dbReference>
<dbReference type="DNASU" id="284434"/>
<dbReference type="Ensembl" id="ENST00000438489.6">
    <molecule id="Q149M9-2"/>
    <property type="protein sequence ID" value="ENSP00000400248.2"/>
    <property type="gene ID" value="ENSG00000188039.17"/>
</dbReference>
<dbReference type="Ensembl" id="ENST00000524140.7">
    <molecule id="Q149M9-3"/>
    <property type="protein sequence ID" value="ENSP00000428579.2"/>
    <property type="gene ID" value="ENSG00000188039.17"/>
</dbReference>
<dbReference type="Ensembl" id="ENST00000552788.1">
    <molecule id="Q149M9-1"/>
    <property type="protein sequence ID" value="ENSP00000447224.1"/>
    <property type="gene ID" value="ENSG00000188039.17"/>
</dbReference>
<dbReference type="Ensembl" id="ENST00000646016.2">
    <molecule id="Q149M9-2"/>
    <property type="protein sequence ID" value="ENSP00000496092.2"/>
    <property type="gene ID" value="ENSG00000188039.17"/>
</dbReference>
<dbReference type="Ensembl" id="ENST00000673803.1">
    <molecule id="Q149M9-3"/>
    <property type="protein sequence ID" value="ENSP00000501265.1"/>
    <property type="gene ID" value="ENSG00000188039.17"/>
</dbReference>
<dbReference type="GeneID" id="284434"/>
<dbReference type="KEGG" id="hsa:284434"/>
<dbReference type="MANE-Select" id="ENST00000524140.7">
    <molecule id="Q149M9-3"/>
    <property type="protein sequence ID" value="ENSP00000428579.2"/>
    <property type="RefSeq nucleotide sequence ID" value="NM_001007525.5"/>
    <property type="RefSeq protein sequence ID" value="NP_001007526.3"/>
</dbReference>
<dbReference type="UCSC" id="uc002neu.5">
    <molecule id="Q149M9-1"/>
    <property type="organism name" value="human"/>
</dbReference>
<dbReference type="AGR" id="HGNC:27619"/>
<dbReference type="CTD" id="284434"/>
<dbReference type="DisGeNET" id="284434"/>
<dbReference type="GeneCards" id="NWD1"/>
<dbReference type="HGNC" id="HGNC:27619">
    <property type="gene designation" value="NWD1"/>
</dbReference>
<dbReference type="HPA" id="ENSG00000188039">
    <property type="expression patterns" value="Tissue enriched (choroid)"/>
</dbReference>
<dbReference type="MalaCards" id="NWD1"/>
<dbReference type="MIM" id="616250">
    <property type="type" value="gene"/>
</dbReference>
<dbReference type="neXtProt" id="NX_Q149M9"/>
<dbReference type="OpenTargets" id="ENSG00000188039"/>
<dbReference type="VEuPathDB" id="HostDB:ENSG00000188039"/>
<dbReference type="eggNOG" id="KOG0265">
    <property type="taxonomic scope" value="Eukaryota"/>
</dbReference>
<dbReference type="eggNOG" id="KOG3602">
    <property type="taxonomic scope" value="Eukaryota"/>
</dbReference>
<dbReference type="GeneTree" id="ENSGT00940000161635"/>
<dbReference type="HOGENOM" id="CLU_2653829_0_0_1"/>
<dbReference type="InParanoid" id="Q149M9"/>
<dbReference type="OMA" id="RGVQCVC"/>
<dbReference type="OrthoDB" id="6134417at2759"/>
<dbReference type="PAN-GO" id="Q149M9">
    <property type="GO annotations" value="0 GO annotations based on evolutionary models"/>
</dbReference>
<dbReference type="PhylomeDB" id="Q149M9"/>
<dbReference type="TreeFam" id="TF332647"/>
<dbReference type="PathwayCommons" id="Q149M9"/>
<dbReference type="SignaLink" id="Q149M9"/>
<dbReference type="BioGRID-ORCS" id="284434">
    <property type="hits" value="12 hits in 1140 CRISPR screens"/>
</dbReference>
<dbReference type="ChiTaRS" id="NWD1">
    <property type="organism name" value="human"/>
</dbReference>
<dbReference type="GeneWiki" id="NWD1"/>
<dbReference type="GenomeRNAi" id="284434"/>
<dbReference type="Pharos" id="Q149M9">
    <property type="development level" value="Tdark"/>
</dbReference>
<dbReference type="PRO" id="PR:Q149M9"/>
<dbReference type="Proteomes" id="UP000005640">
    <property type="component" value="Chromosome 19"/>
</dbReference>
<dbReference type="RNAct" id="Q149M9">
    <property type="molecule type" value="protein"/>
</dbReference>
<dbReference type="Bgee" id="ENSG00000188039">
    <property type="expression patterns" value="Expressed in olfactory segment of nasal mucosa and 79 other cell types or tissues"/>
</dbReference>
<dbReference type="ExpressionAtlas" id="Q149M9">
    <property type="expression patterns" value="baseline and differential"/>
</dbReference>
<dbReference type="GO" id="GO:0005829">
    <property type="term" value="C:cytosol"/>
    <property type="evidence" value="ECO:0000314"/>
    <property type="project" value="HPA"/>
</dbReference>
<dbReference type="GO" id="GO:0005730">
    <property type="term" value="C:nucleolus"/>
    <property type="evidence" value="ECO:0000314"/>
    <property type="project" value="HPA"/>
</dbReference>
<dbReference type="GO" id="GO:0005524">
    <property type="term" value="F:ATP binding"/>
    <property type="evidence" value="ECO:0007669"/>
    <property type="project" value="UniProtKB-KW"/>
</dbReference>
<dbReference type="GO" id="GO:0032088">
    <property type="term" value="P:negative regulation of NF-kappaB transcription factor activity"/>
    <property type="evidence" value="ECO:0000315"/>
    <property type="project" value="UniProtKB"/>
</dbReference>
<dbReference type="GO" id="GO:0010628">
    <property type="term" value="P:positive regulation of gene expression"/>
    <property type="evidence" value="ECO:0000315"/>
    <property type="project" value="UniProtKB"/>
</dbReference>
<dbReference type="FunFam" id="2.130.10.10:FF:001019">
    <property type="entry name" value="NACHT and WD repeat domain containing 1"/>
    <property type="match status" value="1"/>
</dbReference>
<dbReference type="FunFam" id="2.130.10.10:FF:001229">
    <property type="entry name" value="NACHT and WD repeat domain containing 1"/>
    <property type="match status" value="1"/>
</dbReference>
<dbReference type="FunFam" id="2.130.10.10:FF:001701">
    <property type="entry name" value="NACHT and WD repeat domain containing 1"/>
    <property type="match status" value="1"/>
</dbReference>
<dbReference type="FunFam" id="3.40.50.300:FF:001720">
    <property type="entry name" value="NACHT and WD repeat domain containing 1"/>
    <property type="match status" value="1"/>
</dbReference>
<dbReference type="Gene3D" id="3.40.50.300">
    <property type="entry name" value="P-loop containing nucleotide triphosphate hydrolases"/>
    <property type="match status" value="1"/>
</dbReference>
<dbReference type="Gene3D" id="2.130.10.10">
    <property type="entry name" value="YVTN repeat-like/Quinoprotein amine dehydrogenase"/>
    <property type="match status" value="4"/>
</dbReference>
<dbReference type="InterPro" id="IPR024977">
    <property type="entry name" value="Apc4-like_WD40_dom"/>
</dbReference>
<dbReference type="InterPro" id="IPR007111">
    <property type="entry name" value="NACHT_NTPase"/>
</dbReference>
<dbReference type="InterPro" id="IPR043365">
    <property type="entry name" value="NWD1"/>
</dbReference>
<dbReference type="InterPro" id="IPR027417">
    <property type="entry name" value="P-loop_NTPase"/>
</dbReference>
<dbReference type="InterPro" id="IPR011047">
    <property type="entry name" value="Quinoprotein_ADH-like_sf"/>
</dbReference>
<dbReference type="InterPro" id="IPR015943">
    <property type="entry name" value="WD40/YVTN_repeat-like_dom_sf"/>
</dbReference>
<dbReference type="InterPro" id="IPR019775">
    <property type="entry name" value="WD40_repeat_CS"/>
</dbReference>
<dbReference type="InterPro" id="IPR001680">
    <property type="entry name" value="WD40_rpt"/>
</dbReference>
<dbReference type="PANTHER" id="PTHR45013">
    <property type="entry name" value="NACHT DOMAIN- AND WD REPEAT-CONTAINING PROTEIN 1"/>
    <property type="match status" value="1"/>
</dbReference>
<dbReference type="PANTHER" id="PTHR45013:SF1">
    <property type="entry name" value="NACHT DOMAIN- AND WD REPEAT-CONTAINING PROTEIN 1"/>
    <property type="match status" value="1"/>
</dbReference>
<dbReference type="Pfam" id="PF12894">
    <property type="entry name" value="ANAPC4_WD40"/>
    <property type="match status" value="1"/>
</dbReference>
<dbReference type="Pfam" id="PF25469">
    <property type="entry name" value="HTH_NWD1"/>
    <property type="match status" value="1"/>
</dbReference>
<dbReference type="Pfam" id="PF05729">
    <property type="entry name" value="NACHT"/>
    <property type="match status" value="1"/>
</dbReference>
<dbReference type="Pfam" id="PF00400">
    <property type="entry name" value="WD40"/>
    <property type="match status" value="2"/>
</dbReference>
<dbReference type="SMART" id="SM00320">
    <property type="entry name" value="WD40"/>
    <property type="match status" value="11"/>
</dbReference>
<dbReference type="SUPFAM" id="SSF52540">
    <property type="entry name" value="P-loop containing nucleoside triphosphate hydrolases"/>
    <property type="match status" value="1"/>
</dbReference>
<dbReference type="SUPFAM" id="SSF50998">
    <property type="entry name" value="Quinoprotein alcohol dehydrogenase-like"/>
    <property type="match status" value="2"/>
</dbReference>
<dbReference type="PROSITE" id="PS00678">
    <property type="entry name" value="WD_REPEATS_1"/>
    <property type="match status" value="2"/>
</dbReference>
<dbReference type="PROSITE" id="PS50082">
    <property type="entry name" value="WD_REPEATS_2"/>
    <property type="match status" value="4"/>
</dbReference>
<dbReference type="PROSITE" id="PS50294">
    <property type="entry name" value="WD_REPEATS_REGION"/>
    <property type="match status" value="3"/>
</dbReference>
<feature type="chain" id="PRO_0000308254" description="NACHT domain- and WD repeat-containing protein 1">
    <location>
        <begin position="1"/>
        <end position="1564"/>
    </location>
</feature>
<feature type="domain" description="NACHT">
    <location>
        <begin position="335"/>
        <end position="661"/>
    </location>
</feature>
<feature type="repeat" description="WD 1">
    <location>
        <begin position="866"/>
        <end position="905"/>
    </location>
</feature>
<feature type="repeat" description="WD 2">
    <location>
        <begin position="908"/>
        <end position="947"/>
    </location>
</feature>
<feature type="repeat" description="WD 3">
    <location>
        <begin position="956"/>
        <end position="994"/>
    </location>
</feature>
<feature type="repeat" description="WD 4">
    <location>
        <begin position="998"/>
        <end position="1037"/>
    </location>
</feature>
<feature type="repeat" description="WD 5">
    <location>
        <begin position="1044"/>
        <end position="1082"/>
    </location>
</feature>
<feature type="repeat" description="WD 6">
    <location>
        <begin position="1083"/>
        <end position="1121"/>
    </location>
</feature>
<feature type="repeat" description="WD 7">
    <location>
        <begin position="1126"/>
        <end position="1165"/>
    </location>
</feature>
<feature type="repeat" description="WD 8">
    <location>
        <begin position="1167"/>
        <end position="1207"/>
    </location>
</feature>
<feature type="repeat" description="WD 9">
    <location>
        <begin position="1212"/>
        <end position="1251"/>
    </location>
</feature>
<feature type="repeat" description="WD 10">
    <location>
        <begin position="1253"/>
        <end position="1290"/>
    </location>
</feature>
<feature type="repeat" description="WD 11">
    <location>
        <begin position="1291"/>
        <end position="1327"/>
    </location>
</feature>
<feature type="repeat" description="WD 12">
    <location>
        <begin position="1338"/>
        <end position="1376"/>
    </location>
</feature>
<feature type="repeat" description="WD 13">
    <location>
        <begin position="1380"/>
        <end position="1418"/>
    </location>
</feature>
<feature type="repeat" description="WD 14">
    <location>
        <begin position="1425"/>
        <end position="1462"/>
    </location>
</feature>
<feature type="binding site" evidence="1">
    <location>
        <begin position="341"/>
        <end position="348"/>
    </location>
    <ligand>
        <name>ATP</name>
        <dbReference type="ChEBI" id="CHEBI:30616"/>
    </ligand>
</feature>
<feature type="splice variant" id="VSP_040651" description="In isoform 2." evidence="4">
    <original>ALIGDQYGPC</original>
    <variation>EKCADPCPGQ</variation>
    <location>
        <begin position="67"/>
        <end position="76"/>
    </location>
</feature>
<feature type="splice variant" id="VSP_040652" description="In isoform 2." evidence="4">
    <location>
        <begin position="77"/>
        <end position="1564"/>
    </location>
</feature>
<feature type="splice variant" id="VSP_028940" description="In isoform 3." evidence="5">
    <original>SSY</original>
    <variation>APC</variation>
    <location>
        <begin position="1430"/>
        <end position="1432"/>
    </location>
</feature>
<feature type="splice variant" id="VSP_028941" description="In isoform 3." evidence="5">
    <location>
        <begin position="1433"/>
        <end position="1564"/>
    </location>
</feature>
<feature type="sequence variant" id="VAR_036769" description="In dbSNP:rs3888834." evidence="2">
    <original>S</original>
    <variation>G</variation>
    <location>
        <position position="174"/>
    </location>
</feature>
<feature type="sequence variant" id="VAR_036770" description="In dbSNP:rs11668502.">
    <original>L</original>
    <variation>F</variation>
    <location>
        <position position="211"/>
    </location>
</feature>
<feature type="sequence variant" id="VAR_036771" description="In dbSNP:rs706764." evidence="2">
    <original>A</original>
    <variation>T</variation>
    <location>
        <position position="218"/>
    </location>
</feature>
<feature type="sequence variant" id="VAR_036772" description="In dbSNP:rs773930.">
    <original>Q</original>
    <variation>E</variation>
    <location>
        <position position="900"/>
    </location>
</feature>
<feature type="sequence variant" id="VAR_036773" description="In dbSNP:rs2608737." evidence="2">
    <original>N</original>
    <variation>I</variation>
    <location>
        <position position="926"/>
    </location>
</feature>
<feature type="sequence variant" id="VAR_036774" description="In dbSNP:rs2608738.">
    <original>H</original>
    <variation>R</variation>
    <location>
        <position position="935"/>
    </location>
</feature>
<feature type="sequence variant" id="VAR_036775" description="In dbSNP:rs11671361.">
    <original>D</original>
    <variation>V</variation>
    <location>
        <position position="1541"/>
    </location>
</feature>
<feature type="sequence conflict" description="In Ref. 1; CAH18655." evidence="6" ref="1">
    <original>C</original>
    <variation>F</variation>
    <location>
        <position position="15"/>
    </location>
</feature>
<feature type="sequence conflict" description="In Ref. 1; CAH18655." evidence="6" ref="1">
    <original>I</original>
    <variation>V</variation>
    <location>
        <position position="78"/>
    </location>
</feature>
<feature type="sequence conflict" description="In Ref. 1; CAH18655." evidence="6" ref="1">
    <original>H</original>
    <variation>Y</variation>
    <location>
        <position position="994"/>
    </location>
</feature>
<feature type="sequence conflict" description="In Ref. 1; CAH18655." evidence="6" ref="1">
    <original>K</original>
    <variation>R</variation>
    <location>
        <position position="1056"/>
    </location>
</feature>
<feature type="sequence conflict" description="In Ref. 1; CAH18655." evidence="6" ref="1">
    <original>N</original>
    <variation>S</variation>
    <location>
        <position position="1141"/>
    </location>
</feature>
<feature type="sequence conflict" description="In Ref. 1; CAH18655." evidence="6" ref="1">
    <original>G</original>
    <variation>R</variation>
    <location>
        <position position="1171"/>
    </location>
</feature>
<feature type="sequence conflict" description="In Ref. 1; CAH18655." evidence="6" ref="1">
    <original>K</original>
    <variation>R</variation>
    <location>
        <position position="1399"/>
    </location>
</feature>
<sequence length="1564" mass="174552">MQRGKPCRALPTLKCQTFCQRHGLMFEVVDLRWGIRNIEATDHLTTELCLEEVDRCWKTSIGPAFVALIGDQYGPCLIPSRIDEKEWEVLRDHLTARPSDLELVARYFQRDENAFPPTYVLQAPGTGEACEPEEATLTSVLRSGAQEARRLGLITQEQWQHYHRSVIEWEIERSLLSSEDREQGATVFLREIQDLHKHILEDCALRMVDRLADGCLDADAQNLLSSLKSHITDMHPGVLKTHRLPWSRDLVNPKNKTHACYLKELGEQFVVRANHQVLTRLRELDTAGQELAWLYQEIRHHLWQSSEVIQTFCGRQELLARLGQQLRHDDSKQHTPLVLFGPPGIGKTALMCKLAEQMPRLLGHKTVTVLRLLGTSQMSSDARGLLKSICFQVCLAYGLPLPPAQVLDAHTRVVQFFHTLLHTVSCRNFESLVLLLDAMDDLDSVRHARRVPWLPLNCPPRVHLILSACSGALGVLDTLQRVLLDPEAYWEVKPLSGNQGQQMIQLLLAAARRTLSPVHTDLLWASLPECGNPGRLRLAFEEARKWASFTVPVPLATTAEEATHQLCTRLEQTHGQLLVAHVLGYIVSSRHGLSEAELKDVLSLDDEVLQDVYRDWTPPSKELLRFPPLLWVRLRRDLGYYLARRPVDGFTLLAIAHRQLVEVVRERYLSGSERAKRHGVLADFFSGTWSQGTKKLITLPLVGKPLNLDRKVAPQPLWFSHTVANLRKLKELPYHLLHSGRLEELKQEVLGSMSWISCRGISGGIEDLLDDFDLCAPHLDSPEVGLVREALQLCRPAVELRGMERSLLYTELLARLHFFATSHPALVGQLCQQAQSWFQLCAHPVLVPLGGFLQPPGGPLRATLSGCHKGITAMAWGVEEKLLVIGTQDGIMAVWDMEEQHVIHMLTGHTGEVRCVKIFAKGTLANSASKDYTLHLWNLLSGQEKFTIWDGGSKNPAEPQIWNLHVDEAHKVVYSASGSKINAWNLETAEPVFHILGDASDPWMCMAVLASQATLLTVSRDGVVSLWSSATGKLQGKQHMSSIKEETPTCAVSVQKQGKLVTGFSNGSISLVSSKGDRLLEKLPDAVRFLVVSEDESLLAAGFGRSVRIFLADSRGFRRFMAMDLEHEDMVETAVFGTENNLIITGSLDALIQVWSLSEQGTLLDILEGVGAPVSLLARGGALVASASPQSSSFKVWDLSDAHRSRVPAPFLDRTGLTAVSHNGSYVYFPKIGDKNKVTIWDLAEGEEQDSLDTSSEIRCLEVAEQRKLLFTGLVSGVVLVFPLNSRQDVICIPPPEARKAINCMSLSKCEDRLAIAYDNIVLVLDITSGDPCPVIDGPRYTFYTQLPETLSSVAILTDYRVVYSMTNGDLFLYECATSKAFPLETHRSRVACVEVSHKEQLVVSGSEDALLCLWDLQARKWKFEMSYTSSYCRGVQCACFSKDDKYVYVGLKDRSILVWSVLDGTLLTVQFVHAVVNRIIPTTSGFIAPTRHGYLIRENFQCLSAKASPQDPLKNFKKAMWMVKSRQREELVAAAGAPQDLESESAQGNETKSNKCSQVCLIV</sequence>
<reference key="1">
    <citation type="journal article" date="2007" name="BMC Genomics">
        <title>The full-ORF clone resource of the German cDNA consortium.</title>
        <authorList>
            <person name="Bechtel S."/>
            <person name="Rosenfelder H."/>
            <person name="Duda A."/>
            <person name="Schmidt C.P."/>
            <person name="Ernst U."/>
            <person name="Wellenreuther R."/>
            <person name="Mehrle A."/>
            <person name="Schuster C."/>
            <person name="Bahr A."/>
            <person name="Bloecker H."/>
            <person name="Heubner D."/>
            <person name="Hoerlein A."/>
            <person name="Michel G."/>
            <person name="Wedler H."/>
            <person name="Koehrer K."/>
            <person name="Ottenwaelder B."/>
            <person name="Poustka A."/>
            <person name="Wiemann S."/>
            <person name="Schupp I."/>
        </authorList>
    </citation>
    <scope>NUCLEOTIDE SEQUENCE [LARGE SCALE MRNA] (ISOFORM 3)</scope>
    <scope>VARIANTS GLY-174; THR-218 AND ILE-926</scope>
    <source>
        <tissue>Amygdala</tissue>
    </source>
</reference>
<reference key="2">
    <citation type="journal article" date="2004" name="Nature">
        <title>The DNA sequence and biology of human chromosome 19.</title>
        <authorList>
            <person name="Grimwood J."/>
            <person name="Gordon L.A."/>
            <person name="Olsen A.S."/>
            <person name="Terry A."/>
            <person name="Schmutz J."/>
            <person name="Lamerdin J.E."/>
            <person name="Hellsten U."/>
            <person name="Goodstein D."/>
            <person name="Couronne O."/>
            <person name="Tran-Gyamfi M."/>
            <person name="Aerts A."/>
            <person name="Altherr M."/>
            <person name="Ashworth L."/>
            <person name="Bajorek E."/>
            <person name="Black S."/>
            <person name="Branscomb E."/>
            <person name="Caenepeel S."/>
            <person name="Carrano A.V."/>
            <person name="Caoile C."/>
            <person name="Chan Y.M."/>
            <person name="Christensen M."/>
            <person name="Cleland C.A."/>
            <person name="Copeland A."/>
            <person name="Dalin E."/>
            <person name="Dehal P."/>
            <person name="Denys M."/>
            <person name="Detter J.C."/>
            <person name="Escobar J."/>
            <person name="Flowers D."/>
            <person name="Fotopulos D."/>
            <person name="Garcia C."/>
            <person name="Georgescu A.M."/>
            <person name="Glavina T."/>
            <person name="Gomez M."/>
            <person name="Gonzales E."/>
            <person name="Groza M."/>
            <person name="Hammon N."/>
            <person name="Hawkins T."/>
            <person name="Haydu L."/>
            <person name="Ho I."/>
            <person name="Huang W."/>
            <person name="Israni S."/>
            <person name="Jett J."/>
            <person name="Kadner K."/>
            <person name="Kimball H."/>
            <person name="Kobayashi A."/>
            <person name="Larionov V."/>
            <person name="Leem S.-H."/>
            <person name="Lopez F."/>
            <person name="Lou Y."/>
            <person name="Lowry S."/>
            <person name="Malfatti S."/>
            <person name="Martinez D."/>
            <person name="McCready P.M."/>
            <person name="Medina C."/>
            <person name="Morgan J."/>
            <person name="Nelson K."/>
            <person name="Nolan M."/>
            <person name="Ovcharenko I."/>
            <person name="Pitluck S."/>
            <person name="Pollard M."/>
            <person name="Popkie A.P."/>
            <person name="Predki P."/>
            <person name="Quan G."/>
            <person name="Ramirez L."/>
            <person name="Rash S."/>
            <person name="Retterer J."/>
            <person name="Rodriguez A."/>
            <person name="Rogers S."/>
            <person name="Salamov A."/>
            <person name="Salazar A."/>
            <person name="She X."/>
            <person name="Smith D."/>
            <person name="Slezak T."/>
            <person name="Solovyev V."/>
            <person name="Thayer N."/>
            <person name="Tice H."/>
            <person name="Tsai M."/>
            <person name="Ustaszewska A."/>
            <person name="Vo N."/>
            <person name="Wagner M."/>
            <person name="Wheeler J."/>
            <person name="Wu K."/>
            <person name="Xie G."/>
            <person name="Yang J."/>
            <person name="Dubchak I."/>
            <person name="Furey T.S."/>
            <person name="DeJong P."/>
            <person name="Dickson M."/>
            <person name="Gordon D."/>
            <person name="Eichler E.E."/>
            <person name="Pennacchio L.A."/>
            <person name="Richardson P."/>
            <person name="Stubbs L."/>
            <person name="Rokhsar D.S."/>
            <person name="Myers R.M."/>
            <person name="Rubin E.M."/>
            <person name="Lucas S.M."/>
        </authorList>
    </citation>
    <scope>NUCLEOTIDE SEQUENCE [LARGE SCALE GENOMIC DNA]</scope>
</reference>
<reference key="3">
    <citation type="journal article" date="2004" name="Genome Res.">
        <title>The status, quality, and expansion of the NIH full-length cDNA project: the Mammalian Gene Collection (MGC).</title>
        <authorList>
            <consortium name="The MGC Project Team"/>
        </authorList>
    </citation>
    <scope>NUCLEOTIDE SEQUENCE [LARGE SCALE MRNA] (ISOFORM 2)</scope>
</reference>
<reference key="4">
    <citation type="journal article" date="2014" name="Oncotarget">
        <title>The NLR-related protein NWD1 is associated with prostate cancer and modulates androgen receptor signaling.</title>
        <authorList>
            <person name="Correa R.G."/>
            <person name="Krajewska M."/>
            <person name="Ware C.F."/>
            <person name="Gerlic M."/>
            <person name="Reed J.C."/>
        </authorList>
    </citation>
    <scope>FUNCTION</scope>
    <scope>INTERACTION WITH HSP90AA1; HSP90AB1 AND BAG2</scope>
    <scope>SUBCELLULAR LOCATION</scope>
    <scope>TISSUE SPECIFICITY</scope>
    <scope>INDUCTION BY SOX9 AND SRY</scope>
</reference>
<gene>
    <name type="primary">NWD1</name>
</gene>
<name>NWD1_HUMAN</name>
<organism>
    <name type="scientific">Homo sapiens</name>
    <name type="common">Human</name>
    <dbReference type="NCBI Taxonomy" id="9606"/>
    <lineage>
        <taxon>Eukaryota</taxon>
        <taxon>Metazoa</taxon>
        <taxon>Chordata</taxon>
        <taxon>Craniata</taxon>
        <taxon>Vertebrata</taxon>
        <taxon>Euteleostomi</taxon>
        <taxon>Mammalia</taxon>
        <taxon>Eutheria</taxon>
        <taxon>Euarchontoglires</taxon>
        <taxon>Primates</taxon>
        <taxon>Haplorrhini</taxon>
        <taxon>Catarrhini</taxon>
        <taxon>Hominidae</taxon>
        <taxon>Homo</taxon>
    </lineage>
</organism>
<evidence type="ECO:0000255" key="1"/>
<evidence type="ECO:0000269" key="2">
    <source>
    </source>
</evidence>
<evidence type="ECO:0000269" key="3">
    <source>
    </source>
</evidence>
<evidence type="ECO:0000303" key="4">
    <source>
    </source>
</evidence>
<evidence type="ECO:0000303" key="5">
    <source>
    </source>
</evidence>
<evidence type="ECO:0000305" key="6"/>